<evidence type="ECO:0000255" key="1">
    <source>
        <dbReference type="HAMAP-Rule" id="MF_01338"/>
    </source>
</evidence>
<reference key="1">
    <citation type="journal article" date="1992" name="Science">
        <title>Carnivorous plants: phylogeny and structural evolution.</title>
        <authorList>
            <person name="Albert V.A."/>
            <person name="Williams S.E."/>
            <person name="Chase M.W."/>
        </authorList>
    </citation>
    <scope>NUCLEOTIDE SEQUENCE [GENOMIC DNA]</scope>
</reference>
<protein>
    <recommendedName>
        <fullName evidence="1">Ribulose bisphosphate carboxylase large chain</fullName>
        <shortName evidence="1">RuBisCO large subunit</shortName>
        <ecNumber evidence="1">4.1.1.39</ecNumber>
    </recommendedName>
</protein>
<organism>
    <name type="scientific">Drosera burmannii</name>
    <name type="common">Burmese sundew</name>
    <dbReference type="NCBI Taxonomy" id="4365"/>
    <lineage>
        <taxon>Eukaryota</taxon>
        <taxon>Viridiplantae</taxon>
        <taxon>Streptophyta</taxon>
        <taxon>Embryophyta</taxon>
        <taxon>Tracheophyta</taxon>
        <taxon>Spermatophyta</taxon>
        <taxon>Magnoliopsida</taxon>
        <taxon>eudicotyledons</taxon>
        <taxon>Gunneridae</taxon>
        <taxon>Pentapetalae</taxon>
        <taxon>Caryophyllales</taxon>
        <taxon>Droseraceae</taxon>
        <taxon>Drosera</taxon>
    </lineage>
</organism>
<feature type="chain" id="PRO_0000062447" description="Ribulose bisphosphate carboxylase large chain">
    <location>
        <begin position="1" status="less than"/>
        <end position="435" status="greater than"/>
    </location>
</feature>
<feature type="active site" description="Proton acceptor" evidence="1">
    <location>
        <position position="166"/>
    </location>
</feature>
<feature type="active site" description="Proton acceptor" evidence="1">
    <location>
        <position position="285"/>
    </location>
</feature>
<feature type="binding site" description="in homodimeric partner" evidence="1">
    <location>
        <position position="114"/>
    </location>
    <ligand>
        <name>substrate</name>
    </ligand>
</feature>
<feature type="binding site" evidence="1">
    <location>
        <position position="164"/>
    </location>
    <ligand>
        <name>substrate</name>
    </ligand>
</feature>
<feature type="binding site" evidence="1">
    <location>
        <position position="168"/>
    </location>
    <ligand>
        <name>substrate</name>
    </ligand>
</feature>
<feature type="binding site" description="via carbamate group" evidence="1">
    <location>
        <position position="192"/>
    </location>
    <ligand>
        <name>Mg(2+)</name>
        <dbReference type="ChEBI" id="CHEBI:18420"/>
    </ligand>
</feature>
<feature type="binding site" evidence="1">
    <location>
        <position position="194"/>
    </location>
    <ligand>
        <name>Mg(2+)</name>
        <dbReference type="ChEBI" id="CHEBI:18420"/>
    </ligand>
</feature>
<feature type="binding site" evidence="1">
    <location>
        <position position="195"/>
    </location>
    <ligand>
        <name>Mg(2+)</name>
        <dbReference type="ChEBI" id="CHEBI:18420"/>
    </ligand>
</feature>
<feature type="binding site" evidence="1">
    <location>
        <position position="286"/>
    </location>
    <ligand>
        <name>substrate</name>
    </ligand>
</feature>
<feature type="binding site" evidence="1">
    <location>
        <position position="318"/>
    </location>
    <ligand>
        <name>substrate</name>
    </ligand>
</feature>
<feature type="binding site" evidence="1">
    <location>
        <position position="370"/>
    </location>
    <ligand>
        <name>substrate</name>
    </ligand>
</feature>
<feature type="site" description="Transition state stabilizer" evidence="1">
    <location>
        <position position="325"/>
    </location>
</feature>
<feature type="modified residue" description="N6,N6,N6-trimethyllysine" evidence="1">
    <location>
        <position position="5"/>
    </location>
</feature>
<feature type="modified residue" description="N6-carboxylysine" evidence="1">
    <location>
        <position position="192"/>
    </location>
</feature>
<feature type="disulfide bond" description="Interchain; in linked form" evidence="1">
    <location>
        <position position="238"/>
    </location>
</feature>
<feature type="non-terminal residue">
    <location>
        <position position="1"/>
    </location>
</feature>
<feature type="non-terminal residue">
    <location>
        <position position="435"/>
    </location>
</feature>
<sequence>SVGFKAGVKDYKLTYYTPDYQTLDTDILAAFRVTPQPGVPPEEAGAAVAAESSTGTWTTVWTDGLTSLDRYKGRCYHIEPVAGEDNQYIVYVAYPLDLFEEGSVTNMFTSIVGNVFGFKALRALRLEDLRIPPAYSKTFQGPPHGIQVERDKLNKYGRPLLGCTIKPKLGLSAKNYGRAVYECLRGGLDFTKDDENVNSQPFMRWRDRFLFCAEAIFKAQAETGEIKGHYLNATAGTCEEMIKRAVFARELGVPIVMHDYLTGGFTANTSLAHYCRDNGLLLHIHRAMHAVIDRQKNHGIHFRVLAKALRLSGGDHIHSGTVVGKLEGERDITLGFVDLLRDDVIEKDRSRGIYFSQFWVSLPGVLPVASGGIHVWHMPALTEIFGDDSVLQFGGGTLGHPWGNPPGAAANRVALEACVQARNEGQDLAREGNEI</sequence>
<dbReference type="EC" id="4.1.1.39" evidence="1"/>
<dbReference type="EMBL" id="L01908">
    <property type="protein sequence ID" value="AAA16233.2"/>
    <property type="molecule type" value="Genomic_DNA"/>
</dbReference>
<dbReference type="SMR" id="P28404"/>
<dbReference type="GO" id="GO:0009507">
    <property type="term" value="C:chloroplast"/>
    <property type="evidence" value="ECO:0007669"/>
    <property type="project" value="UniProtKB-SubCell"/>
</dbReference>
<dbReference type="GO" id="GO:0000287">
    <property type="term" value="F:magnesium ion binding"/>
    <property type="evidence" value="ECO:0007669"/>
    <property type="project" value="InterPro"/>
</dbReference>
<dbReference type="GO" id="GO:0004497">
    <property type="term" value="F:monooxygenase activity"/>
    <property type="evidence" value="ECO:0007669"/>
    <property type="project" value="UniProtKB-KW"/>
</dbReference>
<dbReference type="GO" id="GO:0016984">
    <property type="term" value="F:ribulose-bisphosphate carboxylase activity"/>
    <property type="evidence" value="ECO:0007669"/>
    <property type="project" value="UniProtKB-EC"/>
</dbReference>
<dbReference type="GO" id="GO:0009853">
    <property type="term" value="P:photorespiration"/>
    <property type="evidence" value="ECO:0007669"/>
    <property type="project" value="UniProtKB-KW"/>
</dbReference>
<dbReference type="GO" id="GO:0019253">
    <property type="term" value="P:reductive pentose-phosphate cycle"/>
    <property type="evidence" value="ECO:0007669"/>
    <property type="project" value="UniProtKB-KW"/>
</dbReference>
<dbReference type="CDD" id="cd08212">
    <property type="entry name" value="RuBisCO_large_I"/>
    <property type="match status" value="1"/>
</dbReference>
<dbReference type="FunFam" id="3.20.20.110:FF:000003">
    <property type="entry name" value="Ribulose bisphosphate carboxylase large chain"/>
    <property type="match status" value="1"/>
</dbReference>
<dbReference type="FunFam" id="3.30.70.150:FF:000001">
    <property type="entry name" value="Ribulose bisphosphate carboxylase large chain"/>
    <property type="match status" value="1"/>
</dbReference>
<dbReference type="Gene3D" id="3.20.20.110">
    <property type="entry name" value="Ribulose bisphosphate carboxylase, large subunit, C-terminal domain"/>
    <property type="match status" value="1"/>
</dbReference>
<dbReference type="Gene3D" id="3.30.70.150">
    <property type="entry name" value="RuBisCO large subunit, N-terminal domain"/>
    <property type="match status" value="1"/>
</dbReference>
<dbReference type="HAMAP" id="MF_01338">
    <property type="entry name" value="RuBisCO_L_type1"/>
    <property type="match status" value="1"/>
</dbReference>
<dbReference type="InterPro" id="IPR033966">
    <property type="entry name" value="RuBisCO"/>
</dbReference>
<dbReference type="InterPro" id="IPR020878">
    <property type="entry name" value="RuBisCo_large_chain_AS"/>
</dbReference>
<dbReference type="InterPro" id="IPR000685">
    <property type="entry name" value="RuBisCO_lsu_C"/>
</dbReference>
<dbReference type="InterPro" id="IPR036376">
    <property type="entry name" value="RuBisCO_lsu_C_sf"/>
</dbReference>
<dbReference type="InterPro" id="IPR017443">
    <property type="entry name" value="RuBisCO_lsu_fd_N"/>
</dbReference>
<dbReference type="InterPro" id="IPR036422">
    <property type="entry name" value="RuBisCO_lsu_N_sf"/>
</dbReference>
<dbReference type="InterPro" id="IPR020888">
    <property type="entry name" value="RuBisCO_lsuI"/>
</dbReference>
<dbReference type="NCBIfam" id="NF003252">
    <property type="entry name" value="PRK04208.1"/>
    <property type="match status" value="1"/>
</dbReference>
<dbReference type="PANTHER" id="PTHR42704">
    <property type="entry name" value="RIBULOSE BISPHOSPHATE CARBOXYLASE"/>
    <property type="match status" value="1"/>
</dbReference>
<dbReference type="PANTHER" id="PTHR42704:SF15">
    <property type="entry name" value="RIBULOSE BISPHOSPHATE CARBOXYLASE LARGE CHAIN"/>
    <property type="match status" value="1"/>
</dbReference>
<dbReference type="Pfam" id="PF00016">
    <property type="entry name" value="RuBisCO_large"/>
    <property type="match status" value="1"/>
</dbReference>
<dbReference type="Pfam" id="PF02788">
    <property type="entry name" value="RuBisCO_large_N"/>
    <property type="match status" value="1"/>
</dbReference>
<dbReference type="SFLD" id="SFLDG01052">
    <property type="entry name" value="RuBisCO"/>
    <property type="match status" value="1"/>
</dbReference>
<dbReference type="SFLD" id="SFLDS00014">
    <property type="entry name" value="RuBisCO"/>
    <property type="match status" value="1"/>
</dbReference>
<dbReference type="SFLD" id="SFLDG00301">
    <property type="entry name" value="RuBisCO-like_proteins"/>
    <property type="match status" value="1"/>
</dbReference>
<dbReference type="SUPFAM" id="SSF51649">
    <property type="entry name" value="RuBisCo, C-terminal domain"/>
    <property type="match status" value="1"/>
</dbReference>
<dbReference type="SUPFAM" id="SSF54966">
    <property type="entry name" value="RuBisCO, large subunit, small (N-terminal) domain"/>
    <property type="match status" value="1"/>
</dbReference>
<dbReference type="PROSITE" id="PS00157">
    <property type="entry name" value="RUBISCO_LARGE"/>
    <property type="match status" value="1"/>
</dbReference>
<gene>
    <name evidence="1" type="primary">rbcL</name>
</gene>
<comment type="function">
    <text evidence="1">RuBisCO catalyzes two reactions: the carboxylation of D-ribulose 1,5-bisphosphate, the primary event in carbon dioxide fixation, as well as the oxidative fragmentation of the pentose substrate in the photorespiration process. Both reactions occur simultaneously and in competition at the same active site.</text>
</comment>
<comment type="catalytic activity">
    <reaction evidence="1">
        <text>2 (2R)-3-phosphoglycerate + 2 H(+) = D-ribulose 1,5-bisphosphate + CO2 + H2O</text>
        <dbReference type="Rhea" id="RHEA:23124"/>
        <dbReference type="ChEBI" id="CHEBI:15377"/>
        <dbReference type="ChEBI" id="CHEBI:15378"/>
        <dbReference type="ChEBI" id="CHEBI:16526"/>
        <dbReference type="ChEBI" id="CHEBI:57870"/>
        <dbReference type="ChEBI" id="CHEBI:58272"/>
        <dbReference type="EC" id="4.1.1.39"/>
    </reaction>
</comment>
<comment type="catalytic activity">
    <reaction evidence="1">
        <text>D-ribulose 1,5-bisphosphate + O2 = 2-phosphoglycolate + (2R)-3-phosphoglycerate + 2 H(+)</text>
        <dbReference type="Rhea" id="RHEA:36631"/>
        <dbReference type="ChEBI" id="CHEBI:15378"/>
        <dbReference type="ChEBI" id="CHEBI:15379"/>
        <dbReference type="ChEBI" id="CHEBI:57870"/>
        <dbReference type="ChEBI" id="CHEBI:58033"/>
        <dbReference type="ChEBI" id="CHEBI:58272"/>
    </reaction>
</comment>
<comment type="cofactor">
    <cofactor evidence="1">
        <name>Mg(2+)</name>
        <dbReference type="ChEBI" id="CHEBI:18420"/>
    </cofactor>
    <text evidence="1">Binds 1 Mg(2+) ion per subunit.</text>
</comment>
<comment type="subunit">
    <text evidence="1">Heterohexadecamer of 8 large chains and 8 small chains; disulfide-linked. The disulfide link is formed within the large subunit homodimers.</text>
</comment>
<comment type="subcellular location">
    <subcellularLocation>
        <location>Plastid</location>
        <location>Chloroplast</location>
    </subcellularLocation>
</comment>
<comment type="PTM">
    <text evidence="1">The disulfide bond which can form in the large chain dimeric partners within the hexadecamer appears to be associated with oxidative stress and protein turnover.</text>
</comment>
<comment type="miscellaneous">
    <text evidence="1">The basic functional RuBisCO is composed of a large chain homodimer in a 'head-to-tail' conformation. In form I RuBisCO this homodimer is arranged in a barrel-like tetramer with the small subunits forming a tetrameric 'cap' on each end of the 'barrel'.</text>
</comment>
<comment type="similarity">
    <text evidence="1">Belongs to the RuBisCO large chain family. Type I subfamily.</text>
</comment>
<proteinExistence type="inferred from homology"/>
<name>RBL_DROBR</name>
<accession>P28404</accession>
<keyword id="KW-0113">Calvin cycle</keyword>
<keyword id="KW-0120">Carbon dioxide fixation</keyword>
<keyword id="KW-0150">Chloroplast</keyword>
<keyword id="KW-1015">Disulfide bond</keyword>
<keyword id="KW-0456">Lyase</keyword>
<keyword id="KW-0460">Magnesium</keyword>
<keyword id="KW-0479">Metal-binding</keyword>
<keyword id="KW-0488">Methylation</keyword>
<keyword id="KW-0503">Monooxygenase</keyword>
<keyword id="KW-0560">Oxidoreductase</keyword>
<keyword id="KW-0601">Photorespiration</keyword>
<keyword id="KW-0602">Photosynthesis</keyword>
<keyword id="KW-0934">Plastid</keyword>
<geneLocation type="chloroplast"/>